<evidence type="ECO:0000255" key="1">
    <source>
        <dbReference type="HAMAP-Rule" id="MF_00201"/>
    </source>
</evidence>
<sequence length="242" mass="27391">MEGWQRAFVLHSRPWSETSLMLDVFTEESGRVRLVAKGARSKRSTLKGALQPFTPLLLRFGGRGEVKTLRSAEAVSLALPLSGITLYSGLYINELLSRVLEYETRFSELFFDYLHCIQSLAGVTGTPEPALRRFELALLGHLGYGVNFTHCAGSGEPVDDTMTYRYREEKGFIASVVIDNKTFTGRQLKALNAREFPDADTLRAAKRFTRMALKPYLGGKPLKSRELFRQFMPKRTVKTHYE</sequence>
<feature type="chain" id="PRO_0000227054" description="DNA repair protein RecO">
    <location>
        <begin position="1"/>
        <end position="242"/>
    </location>
</feature>
<accession>Q32CV6</accession>
<keyword id="KW-0227">DNA damage</keyword>
<keyword id="KW-0233">DNA recombination</keyword>
<keyword id="KW-0234">DNA repair</keyword>
<keyword id="KW-1185">Reference proteome</keyword>
<comment type="function">
    <text evidence="1">Involved in DNA repair and RecF pathway recombination.</text>
</comment>
<comment type="subunit">
    <text evidence="1">Monomer.</text>
</comment>
<comment type="similarity">
    <text evidence="1">Belongs to the RecO family.</text>
</comment>
<dbReference type="EMBL" id="CP000034">
    <property type="protein sequence ID" value="ABB62849.1"/>
    <property type="molecule type" value="Genomic_DNA"/>
</dbReference>
<dbReference type="RefSeq" id="WP_000399404.1">
    <property type="nucleotide sequence ID" value="NC_007606.1"/>
</dbReference>
<dbReference type="RefSeq" id="YP_404340.1">
    <property type="nucleotide sequence ID" value="NC_007606.1"/>
</dbReference>
<dbReference type="SMR" id="Q32CV6"/>
<dbReference type="STRING" id="300267.SDY_2806"/>
<dbReference type="EnsemblBacteria" id="ABB62849">
    <property type="protein sequence ID" value="ABB62849"/>
    <property type="gene ID" value="SDY_2806"/>
</dbReference>
<dbReference type="KEGG" id="sdy:SDY_2806"/>
<dbReference type="PATRIC" id="fig|300267.13.peg.3381"/>
<dbReference type="HOGENOM" id="CLU_066645_1_0_6"/>
<dbReference type="Proteomes" id="UP000002716">
    <property type="component" value="Chromosome"/>
</dbReference>
<dbReference type="GO" id="GO:0043590">
    <property type="term" value="C:bacterial nucleoid"/>
    <property type="evidence" value="ECO:0007669"/>
    <property type="project" value="TreeGrafter"/>
</dbReference>
<dbReference type="GO" id="GO:0006310">
    <property type="term" value="P:DNA recombination"/>
    <property type="evidence" value="ECO:0007669"/>
    <property type="project" value="UniProtKB-UniRule"/>
</dbReference>
<dbReference type="GO" id="GO:0006302">
    <property type="term" value="P:double-strand break repair"/>
    <property type="evidence" value="ECO:0007669"/>
    <property type="project" value="TreeGrafter"/>
</dbReference>
<dbReference type="FunFam" id="1.20.1440.120:FF:000001">
    <property type="entry name" value="DNA repair protein RecO"/>
    <property type="match status" value="1"/>
</dbReference>
<dbReference type="FunFam" id="2.40.50.140:FF:000074">
    <property type="entry name" value="DNA repair protein RecO"/>
    <property type="match status" value="1"/>
</dbReference>
<dbReference type="Gene3D" id="2.40.50.140">
    <property type="entry name" value="Nucleic acid-binding proteins"/>
    <property type="match status" value="1"/>
</dbReference>
<dbReference type="Gene3D" id="1.20.1440.120">
    <property type="entry name" value="Recombination protein O, C-terminal domain"/>
    <property type="match status" value="1"/>
</dbReference>
<dbReference type="HAMAP" id="MF_00201">
    <property type="entry name" value="RecO"/>
    <property type="match status" value="1"/>
</dbReference>
<dbReference type="InterPro" id="IPR037278">
    <property type="entry name" value="ARFGAP/RecO"/>
</dbReference>
<dbReference type="InterPro" id="IPR022572">
    <property type="entry name" value="DNA_rep/recomb_RecO_N"/>
</dbReference>
<dbReference type="InterPro" id="IPR012340">
    <property type="entry name" value="NA-bd_OB-fold"/>
</dbReference>
<dbReference type="InterPro" id="IPR003717">
    <property type="entry name" value="RecO"/>
</dbReference>
<dbReference type="InterPro" id="IPR042242">
    <property type="entry name" value="RecO_C"/>
</dbReference>
<dbReference type="NCBIfam" id="TIGR00613">
    <property type="entry name" value="reco"/>
    <property type="match status" value="1"/>
</dbReference>
<dbReference type="PANTHER" id="PTHR33991">
    <property type="entry name" value="DNA REPAIR PROTEIN RECO"/>
    <property type="match status" value="1"/>
</dbReference>
<dbReference type="PANTHER" id="PTHR33991:SF1">
    <property type="entry name" value="DNA REPAIR PROTEIN RECO"/>
    <property type="match status" value="1"/>
</dbReference>
<dbReference type="Pfam" id="PF02565">
    <property type="entry name" value="RecO_C"/>
    <property type="match status" value="1"/>
</dbReference>
<dbReference type="Pfam" id="PF11967">
    <property type="entry name" value="RecO_N"/>
    <property type="match status" value="1"/>
</dbReference>
<dbReference type="SUPFAM" id="SSF57863">
    <property type="entry name" value="ArfGap/RecO-like zinc finger"/>
    <property type="match status" value="1"/>
</dbReference>
<dbReference type="SUPFAM" id="SSF50249">
    <property type="entry name" value="Nucleic acid-binding proteins"/>
    <property type="match status" value="1"/>
</dbReference>
<reference key="1">
    <citation type="journal article" date="2005" name="Nucleic Acids Res.">
        <title>Genome dynamics and diversity of Shigella species, the etiologic agents of bacillary dysentery.</title>
        <authorList>
            <person name="Yang F."/>
            <person name="Yang J."/>
            <person name="Zhang X."/>
            <person name="Chen L."/>
            <person name="Jiang Y."/>
            <person name="Yan Y."/>
            <person name="Tang X."/>
            <person name="Wang J."/>
            <person name="Xiong Z."/>
            <person name="Dong J."/>
            <person name="Xue Y."/>
            <person name="Zhu Y."/>
            <person name="Xu X."/>
            <person name="Sun L."/>
            <person name="Chen S."/>
            <person name="Nie H."/>
            <person name="Peng J."/>
            <person name="Xu J."/>
            <person name="Wang Y."/>
            <person name="Yuan Z."/>
            <person name="Wen Y."/>
            <person name="Yao Z."/>
            <person name="Shen Y."/>
            <person name="Qiang B."/>
            <person name="Hou Y."/>
            <person name="Yu J."/>
            <person name="Jin Q."/>
        </authorList>
    </citation>
    <scope>NUCLEOTIDE SEQUENCE [LARGE SCALE GENOMIC DNA]</scope>
    <source>
        <strain>Sd197</strain>
    </source>
</reference>
<name>RECO_SHIDS</name>
<gene>
    <name evidence="1" type="primary">recO</name>
    <name type="ordered locus">SDY_2806</name>
</gene>
<protein>
    <recommendedName>
        <fullName evidence="1">DNA repair protein RecO</fullName>
    </recommendedName>
    <alternativeName>
        <fullName evidence="1">Recombination protein O</fullName>
    </alternativeName>
</protein>
<organism>
    <name type="scientific">Shigella dysenteriae serotype 1 (strain Sd197)</name>
    <dbReference type="NCBI Taxonomy" id="300267"/>
    <lineage>
        <taxon>Bacteria</taxon>
        <taxon>Pseudomonadati</taxon>
        <taxon>Pseudomonadota</taxon>
        <taxon>Gammaproteobacteria</taxon>
        <taxon>Enterobacterales</taxon>
        <taxon>Enterobacteriaceae</taxon>
        <taxon>Shigella</taxon>
    </lineage>
</organism>
<proteinExistence type="inferred from homology"/>